<organism evidence="8">
    <name type="scientific">Canis lupus familiaris</name>
    <name type="common">Dog</name>
    <name type="synonym">Canis familiaris</name>
    <dbReference type="NCBI Taxonomy" id="9615"/>
    <lineage>
        <taxon>Eukaryota</taxon>
        <taxon>Metazoa</taxon>
        <taxon>Chordata</taxon>
        <taxon>Craniata</taxon>
        <taxon>Vertebrata</taxon>
        <taxon>Euteleostomi</taxon>
        <taxon>Mammalia</taxon>
        <taxon>Eutheria</taxon>
        <taxon>Laurasiatheria</taxon>
        <taxon>Carnivora</taxon>
        <taxon>Caniformia</taxon>
        <taxon>Canidae</taxon>
        <taxon>Canis</taxon>
    </lineage>
</organism>
<evidence type="ECO:0000250" key="1">
    <source>
        <dbReference type="UniProtKB" id="P46965"/>
    </source>
</evidence>
<evidence type="ECO:0000250" key="2">
    <source>
        <dbReference type="UniProtKB" id="Q9Y6A9"/>
    </source>
</evidence>
<evidence type="ECO:0000255" key="3"/>
<evidence type="ECO:0000256" key="4">
    <source>
        <dbReference type="SAM" id="MobiDB-lite"/>
    </source>
</evidence>
<evidence type="ECO:0000269" key="5">
    <source>
    </source>
</evidence>
<evidence type="ECO:0000269" key="6">
    <source>
    </source>
</evidence>
<evidence type="ECO:0000305" key="7"/>
<evidence type="ECO:0000312" key="8">
    <source>
        <dbReference type="Proteomes" id="UP000002254"/>
    </source>
</evidence>
<feature type="chain" id="PRO_0000215153" description="Signal peptidase complex subunit 1">
    <location>
        <begin position="1"/>
        <end position="102"/>
    </location>
</feature>
<feature type="topological domain" description="Cytoplasmic" evidence="6">
    <location>
        <begin position="1"/>
        <end position="26"/>
    </location>
</feature>
<feature type="transmembrane region" description="Helical" evidence="3">
    <location>
        <begin position="27"/>
        <end position="47"/>
    </location>
</feature>
<feature type="topological domain" description="Lumenal" evidence="6">
    <location>
        <position position="48"/>
    </location>
</feature>
<feature type="transmembrane region" description="Helical" evidence="3">
    <location>
        <begin position="49"/>
        <end position="69"/>
    </location>
</feature>
<feature type="topological domain" description="Cytoplasmic" evidence="6">
    <location>
        <begin position="70"/>
        <end position="102"/>
    </location>
</feature>
<feature type="region of interest" description="Disordered" evidence="4">
    <location>
        <begin position="81"/>
        <end position="102"/>
    </location>
</feature>
<accession>P83362</accession>
<accession>F6V6C9</accession>
<comment type="function">
    <text evidence="1 5">Component of the signal peptidase complex (SPC) which catalyzes the cleavage of N-terminal signal sequences from nascent proteins as they are translocated into the lumen of the endoplasmic reticulum (PubMed:3511473). Dispensable for SPC enzymatic activity (By similarity).</text>
</comment>
<comment type="subunit">
    <text evidence="2 5">Component of the signal peptidase complex paralog A (SPC-A) composed of a catalytic subunit SEC11A and three accessory subunits SPCS1, SPCS2 and SPCS3 (PubMed:3511473). Component of the signal peptidase complex paralog C (SPC-C) composed of a catalytic subunit SEC11C and three accessory subunits SPCS1, SPCS2 and SPCS3 (PubMed:3511473). Within the complex, interacts with SPCS2 and SPCS3 (By similarity). The complex induces a local thinning of the ER membrane which is used to measure the length of the signal peptide (SP) h-region of protein substrates (By similarity). This ensures the selectivity of the complex towards h-regions shorter than 18-20 amino acids (By similarity).</text>
</comment>
<comment type="subcellular location">
    <subcellularLocation>
        <location evidence="5 6">Endoplasmic reticulum membrane</location>
        <topology evidence="6">Multi-pass membrane protein</topology>
    </subcellularLocation>
</comment>
<comment type="tissue specificity">
    <text evidence="5 6">Expressed in the pancreas (at protein level).</text>
</comment>
<comment type="PTM">
    <text evidence="2">May be phosphorylated.</text>
</comment>
<comment type="similarity">
    <text evidence="7">Belongs to the SPCS1 family.</text>
</comment>
<keyword id="KW-0903">Direct protein sequencing</keyword>
<keyword id="KW-0256">Endoplasmic reticulum</keyword>
<keyword id="KW-0472">Membrane</keyword>
<keyword id="KW-1185">Reference proteome</keyword>
<keyword id="KW-0812">Transmembrane</keyword>
<keyword id="KW-1133">Transmembrane helix</keyword>
<dbReference type="EMBL" id="AAEX03012192">
    <property type="status" value="NOT_ANNOTATED_CDS"/>
    <property type="molecule type" value="Genomic_DNA"/>
</dbReference>
<dbReference type="EMBL" id="AAEX03012193">
    <property type="status" value="NOT_ANNOTATED_CDS"/>
    <property type="molecule type" value="Genomic_DNA"/>
</dbReference>
<dbReference type="EMBL" id="AAEX03012194">
    <property type="status" value="NOT_ANNOTATED_CDS"/>
    <property type="molecule type" value="Genomic_DNA"/>
</dbReference>
<dbReference type="EMBL" id="AAEX03012195">
    <property type="status" value="NOT_ANNOTATED_CDS"/>
    <property type="molecule type" value="Genomic_DNA"/>
</dbReference>
<dbReference type="EMBL" id="AAEX03012196">
    <property type="status" value="NOT_ANNOTATED_CDS"/>
    <property type="molecule type" value="Genomic_DNA"/>
</dbReference>
<dbReference type="RefSeq" id="XP_038283470.1">
    <property type="nucleotide sequence ID" value="XM_038427542.1"/>
</dbReference>
<dbReference type="RefSeq" id="XP_038422128.1">
    <property type="nucleotide sequence ID" value="XM_038566200.1"/>
</dbReference>
<dbReference type="RefSeq" id="XP_533796.3">
    <property type="nucleotide sequence ID" value="XM_533796.6"/>
</dbReference>
<dbReference type="SMR" id="P83362"/>
<dbReference type="CORUM" id="P83362"/>
<dbReference type="FunCoup" id="P83362">
    <property type="interactions" value="1373"/>
</dbReference>
<dbReference type="STRING" id="9615.ENSCAFP00000013114"/>
<dbReference type="PaxDb" id="9612-ENSCAFP00000013114"/>
<dbReference type="Ensembl" id="ENSCAFT00000014175.5">
    <property type="protein sequence ID" value="ENSCAFP00000013114.4"/>
    <property type="gene ID" value="ENSCAFG00000008927.5"/>
</dbReference>
<dbReference type="Ensembl" id="ENSCAFT00030009662.1">
    <property type="protein sequence ID" value="ENSCAFP00030008445.1"/>
    <property type="gene ID" value="ENSCAFG00030005286.1"/>
</dbReference>
<dbReference type="Ensembl" id="ENSCAFT00040036434.1">
    <property type="protein sequence ID" value="ENSCAFP00040031725.1"/>
    <property type="gene ID" value="ENSCAFG00040019712.1"/>
</dbReference>
<dbReference type="Ensembl" id="ENSCAFT00845052856.1">
    <property type="protein sequence ID" value="ENSCAFP00845041499.1"/>
    <property type="gene ID" value="ENSCAFG00845029846.1"/>
</dbReference>
<dbReference type="GeneID" id="476592"/>
<dbReference type="KEGG" id="cfa:476592"/>
<dbReference type="CTD" id="28972"/>
<dbReference type="VEuPathDB" id="HostDB:ENSCAFG00845029846"/>
<dbReference type="VGNC" id="VGNC:54997">
    <property type="gene designation" value="SPCS1"/>
</dbReference>
<dbReference type="eggNOG" id="KOG4112">
    <property type="taxonomic scope" value="Eukaryota"/>
</dbReference>
<dbReference type="GeneTree" id="ENSGT00390000018321"/>
<dbReference type="HOGENOM" id="CLU_134505_1_0_1"/>
<dbReference type="InParanoid" id="P83362"/>
<dbReference type="OrthoDB" id="263893at2759"/>
<dbReference type="TreeFam" id="TF106122"/>
<dbReference type="Reactome" id="R-CFA-422085">
    <property type="pathway name" value="Synthesis, secretion, and deacylation of Ghrelin"/>
</dbReference>
<dbReference type="Proteomes" id="UP000002254">
    <property type="component" value="Chromosome 20"/>
</dbReference>
<dbReference type="Proteomes" id="UP000694429">
    <property type="component" value="Chromosome 20"/>
</dbReference>
<dbReference type="Proteomes" id="UP000694542">
    <property type="component" value="Chromosome 20"/>
</dbReference>
<dbReference type="Proteomes" id="UP000805418">
    <property type="component" value="Chromosome 20"/>
</dbReference>
<dbReference type="Bgee" id="ENSCAFG00000008927">
    <property type="expression patterns" value="Expressed in adrenal cortex and 48 other cell types or tissues"/>
</dbReference>
<dbReference type="GO" id="GO:0005789">
    <property type="term" value="C:endoplasmic reticulum membrane"/>
    <property type="evidence" value="ECO:0000250"/>
    <property type="project" value="UniProtKB"/>
</dbReference>
<dbReference type="GO" id="GO:0005787">
    <property type="term" value="C:signal peptidase complex"/>
    <property type="evidence" value="ECO:0000314"/>
    <property type="project" value="UniProtKB"/>
</dbReference>
<dbReference type="GO" id="GO:0045047">
    <property type="term" value="P:protein targeting to ER"/>
    <property type="evidence" value="ECO:0000318"/>
    <property type="project" value="GO_Central"/>
</dbReference>
<dbReference type="GO" id="GO:0006465">
    <property type="term" value="P:signal peptide processing"/>
    <property type="evidence" value="ECO:0000318"/>
    <property type="project" value="GO_Central"/>
</dbReference>
<dbReference type="InterPro" id="IPR009542">
    <property type="entry name" value="Spc1/SPCS1"/>
</dbReference>
<dbReference type="PANTHER" id="PTHR13202">
    <property type="entry name" value="MICROSOMAL SIGNAL PEPTIDASE 12 KDA SUBUNIT"/>
    <property type="match status" value="1"/>
</dbReference>
<dbReference type="PANTHER" id="PTHR13202:SF0">
    <property type="entry name" value="SIGNAL PEPTIDASE COMPLEX SUBUNIT 1"/>
    <property type="match status" value="1"/>
</dbReference>
<dbReference type="Pfam" id="PF06645">
    <property type="entry name" value="SPC12"/>
    <property type="match status" value="1"/>
</dbReference>
<sequence length="102" mass="11761">MLEHLSSLPTQMDYKGQKLAEQMFQGIILFSAIVGFIYGYVAEQFGWTVYIVMAGFAFSCLLTLPPWPIYRRHPLKWLPVQDSGSEDKKPGERKIKRHAKNN</sequence>
<proteinExistence type="evidence at protein level"/>
<reference evidence="8" key="1">
    <citation type="journal article" date="2005" name="Nature">
        <title>Genome sequence, comparative analysis and haplotype structure of the domestic dog.</title>
        <authorList>
            <person name="Lindblad-Toh K."/>
            <person name="Wade C.M."/>
            <person name="Mikkelsen T.S."/>
            <person name="Karlsson E.K."/>
            <person name="Jaffe D.B."/>
            <person name="Kamal M."/>
            <person name="Clamp M."/>
            <person name="Chang J.L."/>
            <person name="Kulbokas E.J. III"/>
            <person name="Zody M.C."/>
            <person name="Mauceli E."/>
            <person name="Xie X."/>
            <person name="Breen M."/>
            <person name="Wayne R.K."/>
            <person name="Ostrander E.A."/>
            <person name="Ponting C.P."/>
            <person name="Galibert F."/>
            <person name="Smith D.R."/>
            <person name="deJong P.J."/>
            <person name="Kirkness E.F."/>
            <person name="Alvarez P."/>
            <person name="Biagi T."/>
            <person name="Brockman W."/>
            <person name="Butler J."/>
            <person name="Chin C.-W."/>
            <person name="Cook A."/>
            <person name="Cuff J."/>
            <person name="Daly M.J."/>
            <person name="DeCaprio D."/>
            <person name="Gnerre S."/>
            <person name="Grabherr M."/>
            <person name="Kellis M."/>
            <person name="Kleber M."/>
            <person name="Bardeleben C."/>
            <person name="Goodstadt L."/>
            <person name="Heger A."/>
            <person name="Hitte C."/>
            <person name="Kim L."/>
            <person name="Koepfli K.-P."/>
            <person name="Parker H.G."/>
            <person name="Pollinger J.P."/>
            <person name="Searle S.M.J."/>
            <person name="Sutter N.B."/>
            <person name="Thomas R."/>
            <person name="Webber C."/>
            <person name="Baldwin J."/>
            <person name="Abebe A."/>
            <person name="Abouelleil A."/>
            <person name="Aftuck L."/>
            <person name="Ait-Zahra M."/>
            <person name="Aldredge T."/>
            <person name="Allen N."/>
            <person name="An P."/>
            <person name="Anderson S."/>
            <person name="Antoine C."/>
            <person name="Arachchi H."/>
            <person name="Aslam A."/>
            <person name="Ayotte L."/>
            <person name="Bachantsang P."/>
            <person name="Barry A."/>
            <person name="Bayul T."/>
            <person name="Benamara M."/>
            <person name="Berlin A."/>
            <person name="Bessette D."/>
            <person name="Blitshteyn B."/>
            <person name="Bloom T."/>
            <person name="Blye J."/>
            <person name="Boguslavskiy L."/>
            <person name="Bonnet C."/>
            <person name="Boukhgalter B."/>
            <person name="Brown A."/>
            <person name="Cahill P."/>
            <person name="Calixte N."/>
            <person name="Camarata J."/>
            <person name="Cheshatsang Y."/>
            <person name="Chu J."/>
            <person name="Citroen M."/>
            <person name="Collymore A."/>
            <person name="Cooke P."/>
            <person name="Dawoe T."/>
            <person name="Daza R."/>
            <person name="Decktor K."/>
            <person name="DeGray S."/>
            <person name="Dhargay N."/>
            <person name="Dooley K."/>
            <person name="Dooley K."/>
            <person name="Dorje P."/>
            <person name="Dorjee K."/>
            <person name="Dorris L."/>
            <person name="Duffey N."/>
            <person name="Dupes A."/>
            <person name="Egbiremolen O."/>
            <person name="Elong R."/>
            <person name="Falk J."/>
            <person name="Farina A."/>
            <person name="Faro S."/>
            <person name="Ferguson D."/>
            <person name="Ferreira P."/>
            <person name="Fisher S."/>
            <person name="FitzGerald M."/>
            <person name="Foley K."/>
            <person name="Foley C."/>
            <person name="Franke A."/>
            <person name="Friedrich D."/>
            <person name="Gage D."/>
            <person name="Garber M."/>
            <person name="Gearin G."/>
            <person name="Giannoukos G."/>
            <person name="Goode T."/>
            <person name="Goyette A."/>
            <person name="Graham J."/>
            <person name="Grandbois E."/>
            <person name="Gyaltsen K."/>
            <person name="Hafez N."/>
            <person name="Hagopian D."/>
            <person name="Hagos B."/>
            <person name="Hall J."/>
            <person name="Healy C."/>
            <person name="Hegarty R."/>
            <person name="Honan T."/>
            <person name="Horn A."/>
            <person name="Houde N."/>
            <person name="Hughes L."/>
            <person name="Hunnicutt L."/>
            <person name="Husby M."/>
            <person name="Jester B."/>
            <person name="Jones C."/>
            <person name="Kamat A."/>
            <person name="Kanga B."/>
            <person name="Kells C."/>
            <person name="Khazanovich D."/>
            <person name="Kieu A.C."/>
            <person name="Kisner P."/>
            <person name="Kumar M."/>
            <person name="Lance K."/>
            <person name="Landers T."/>
            <person name="Lara M."/>
            <person name="Lee W."/>
            <person name="Leger J.-P."/>
            <person name="Lennon N."/>
            <person name="Leuper L."/>
            <person name="LeVine S."/>
            <person name="Liu J."/>
            <person name="Liu X."/>
            <person name="Lokyitsang Y."/>
            <person name="Lokyitsang T."/>
            <person name="Lui A."/>
            <person name="Macdonald J."/>
            <person name="Major J."/>
            <person name="Marabella R."/>
            <person name="Maru K."/>
            <person name="Matthews C."/>
            <person name="McDonough S."/>
            <person name="Mehta T."/>
            <person name="Meldrim J."/>
            <person name="Melnikov A."/>
            <person name="Meneus L."/>
            <person name="Mihalev A."/>
            <person name="Mihova T."/>
            <person name="Miller K."/>
            <person name="Mittelman R."/>
            <person name="Mlenga V."/>
            <person name="Mulrain L."/>
            <person name="Munson G."/>
            <person name="Navidi A."/>
            <person name="Naylor J."/>
            <person name="Nguyen T."/>
            <person name="Nguyen N."/>
            <person name="Nguyen C."/>
            <person name="Nguyen T."/>
            <person name="Nicol R."/>
            <person name="Norbu N."/>
            <person name="Norbu C."/>
            <person name="Novod N."/>
            <person name="Nyima T."/>
            <person name="Olandt P."/>
            <person name="O'Neill B."/>
            <person name="O'Neill K."/>
            <person name="Osman S."/>
            <person name="Oyono L."/>
            <person name="Patti C."/>
            <person name="Perrin D."/>
            <person name="Phunkhang P."/>
            <person name="Pierre F."/>
            <person name="Priest M."/>
            <person name="Rachupka A."/>
            <person name="Raghuraman S."/>
            <person name="Rameau R."/>
            <person name="Ray V."/>
            <person name="Raymond C."/>
            <person name="Rege F."/>
            <person name="Rise C."/>
            <person name="Rogers J."/>
            <person name="Rogov P."/>
            <person name="Sahalie J."/>
            <person name="Settipalli S."/>
            <person name="Sharpe T."/>
            <person name="Shea T."/>
            <person name="Sheehan M."/>
            <person name="Sherpa N."/>
            <person name="Shi J."/>
            <person name="Shih D."/>
            <person name="Sloan J."/>
            <person name="Smith C."/>
            <person name="Sparrow T."/>
            <person name="Stalker J."/>
            <person name="Stange-Thomann N."/>
            <person name="Stavropoulos S."/>
            <person name="Stone C."/>
            <person name="Stone S."/>
            <person name="Sykes S."/>
            <person name="Tchuinga P."/>
            <person name="Tenzing P."/>
            <person name="Tesfaye S."/>
            <person name="Thoulutsang D."/>
            <person name="Thoulutsang Y."/>
            <person name="Topham K."/>
            <person name="Topping I."/>
            <person name="Tsamla T."/>
            <person name="Vassiliev H."/>
            <person name="Venkataraman V."/>
            <person name="Vo A."/>
            <person name="Wangchuk T."/>
            <person name="Wangdi T."/>
            <person name="Weiand M."/>
            <person name="Wilkinson J."/>
            <person name="Wilson A."/>
            <person name="Yadav S."/>
            <person name="Yang S."/>
            <person name="Yang X."/>
            <person name="Young G."/>
            <person name="Yu Q."/>
            <person name="Zainoun J."/>
            <person name="Zembek L."/>
            <person name="Zimmer A."/>
            <person name="Lander E.S."/>
        </authorList>
    </citation>
    <scope>NUCLEOTIDE SEQUENCE [LARGE SCALE GENOMIC DNA]</scope>
    <source>
        <strain evidence="8">Boxer</strain>
    </source>
</reference>
<reference key="2">
    <citation type="journal article" date="1996" name="J. Biol. Chem.">
        <title>Membrane topology of the 12- and the 25-kDa subunits of the mammalian signal peptidase complex.</title>
        <authorList>
            <person name="Kalies K.-U."/>
            <person name="Hartmann E."/>
        </authorList>
    </citation>
    <scope>PROTEIN SEQUENCE OF 1-20 AND 139-157</scope>
    <scope>SUBCELLULAR LOCATION</scope>
    <scope>TISSUE SPECIFICITY</scope>
    <scope>TOPOLOGY</scope>
    <source>
        <tissue evidence="6">Pancreas</tissue>
    </source>
</reference>
<reference key="3">
    <citation type="journal article" date="1986" name="Proc. Natl. Acad. Sci. U.S.A.">
        <title>Purification of microsomal signal peptidase as a complex.</title>
        <authorList>
            <person name="Evans E.A."/>
            <person name="Gilmore R."/>
            <person name="Blobel G."/>
        </authorList>
    </citation>
    <scope>FUNCTION</scope>
    <scope>IDENTIFICATION IN THE SIGNAL PEPTIDASE COMPLEX</scope>
    <scope>SUBCELLULAR LOCATION</scope>
    <scope>TISSUE SPECIFICITY</scope>
</reference>
<protein>
    <recommendedName>
        <fullName>Signal peptidase complex subunit 1</fullName>
    </recommendedName>
    <alternativeName>
        <fullName>Microsomal signal peptidase 12 kDa subunit</fullName>
        <shortName>SPase 12 kDa subunit</shortName>
    </alternativeName>
</protein>
<name>SPCS1_CANLF</name>
<gene>
    <name type="primary">SPCS1</name>
    <name type="synonym">SPC12</name>
</gene>